<dbReference type="EC" id="5.3.1.9" evidence="1"/>
<dbReference type="EMBL" id="FM209186">
    <property type="protein sequence ID" value="CAW29871.1"/>
    <property type="molecule type" value="Genomic_DNA"/>
</dbReference>
<dbReference type="RefSeq" id="WP_003100194.1">
    <property type="nucleotide sequence ID" value="NC_011770.1"/>
</dbReference>
<dbReference type="SMR" id="B7V1E4"/>
<dbReference type="KEGG" id="pag:PLES_51171"/>
<dbReference type="HOGENOM" id="CLU_017947_3_1_6"/>
<dbReference type="UniPathway" id="UPA00109">
    <property type="reaction ID" value="UER00181"/>
</dbReference>
<dbReference type="UniPathway" id="UPA00138"/>
<dbReference type="GO" id="GO:0005829">
    <property type="term" value="C:cytosol"/>
    <property type="evidence" value="ECO:0007669"/>
    <property type="project" value="TreeGrafter"/>
</dbReference>
<dbReference type="GO" id="GO:0097367">
    <property type="term" value="F:carbohydrate derivative binding"/>
    <property type="evidence" value="ECO:0007669"/>
    <property type="project" value="InterPro"/>
</dbReference>
<dbReference type="GO" id="GO:0004347">
    <property type="term" value="F:glucose-6-phosphate isomerase activity"/>
    <property type="evidence" value="ECO:0007669"/>
    <property type="project" value="UniProtKB-UniRule"/>
</dbReference>
<dbReference type="GO" id="GO:0048029">
    <property type="term" value="F:monosaccharide binding"/>
    <property type="evidence" value="ECO:0007669"/>
    <property type="project" value="TreeGrafter"/>
</dbReference>
<dbReference type="GO" id="GO:0006094">
    <property type="term" value="P:gluconeogenesis"/>
    <property type="evidence" value="ECO:0007669"/>
    <property type="project" value="UniProtKB-UniRule"/>
</dbReference>
<dbReference type="GO" id="GO:0051156">
    <property type="term" value="P:glucose 6-phosphate metabolic process"/>
    <property type="evidence" value="ECO:0007669"/>
    <property type="project" value="TreeGrafter"/>
</dbReference>
<dbReference type="GO" id="GO:0006096">
    <property type="term" value="P:glycolytic process"/>
    <property type="evidence" value="ECO:0007669"/>
    <property type="project" value="UniProtKB-UniRule"/>
</dbReference>
<dbReference type="CDD" id="cd05015">
    <property type="entry name" value="SIS_PGI_1"/>
    <property type="match status" value="1"/>
</dbReference>
<dbReference type="CDD" id="cd05016">
    <property type="entry name" value="SIS_PGI_2"/>
    <property type="match status" value="1"/>
</dbReference>
<dbReference type="FunFam" id="3.40.50.10490:FF:000018">
    <property type="entry name" value="Glucose-6-phosphate isomerase"/>
    <property type="match status" value="1"/>
</dbReference>
<dbReference type="Gene3D" id="1.10.1390.10">
    <property type="match status" value="1"/>
</dbReference>
<dbReference type="Gene3D" id="3.40.50.10490">
    <property type="entry name" value="Glucose-6-phosphate isomerase like protein, domain 1"/>
    <property type="match status" value="2"/>
</dbReference>
<dbReference type="HAMAP" id="MF_00473">
    <property type="entry name" value="G6P_isomerase"/>
    <property type="match status" value="1"/>
</dbReference>
<dbReference type="InterPro" id="IPR001672">
    <property type="entry name" value="G6P_Isomerase"/>
</dbReference>
<dbReference type="InterPro" id="IPR023096">
    <property type="entry name" value="G6P_Isomerase_C"/>
</dbReference>
<dbReference type="InterPro" id="IPR018189">
    <property type="entry name" value="Phosphoglucose_isomerase_CS"/>
</dbReference>
<dbReference type="InterPro" id="IPR046348">
    <property type="entry name" value="SIS_dom_sf"/>
</dbReference>
<dbReference type="InterPro" id="IPR035476">
    <property type="entry name" value="SIS_PGI_1"/>
</dbReference>
<dbReference type="InterPro" id="IPR035482">
    <property type="entry name" value="SIS_PGI_2"/>
</dbReference>
<dbReference type="NCBIfam" id="NF001211">
    <property type="entry name" value="PRK00179.1"/>
    <property type="match status" value="1"/>
</dbReference>
<dbReference type="PANTHER" id="PTHR11469">
    <property type="entry name" value="GLUCOSE-6-PHOSPHATE ISOMERASE"/>
    <property type="match status" value="1"/>
</dbReference>
<dbReference type="PANTHER" id="PTHR11469:SF1">
    <property type="entry name" value="GLUCOSE-6-PHOSPHATE ISOMERASE"/>
    <property type="match status" value="1"/>
</dbReference>
<dbReference type="Pfam" id="PF00342">
    <property type="entry name" value="PGI"/>
    <property type="match status" value="1"/>
</dbReference>
<dbReference type="PRINTS" id="PR00662">
    <property type="entry name" value="G6PISOMERASE"/>
</dbReference>
<dbReference type="SUPFAM" id="SSF53697">
    <property type="entry name" value="SIS domain"/>
    <property type="match status" value="1"/>
</dbReference>
<dbReference type="PROSITE" id="PS00765">
    <property type="entry name" value="P_GLUCOSE_ISOMERASE_1"/>
    <property type="match status" value="1"/>
</dbReference>
<dbReference type="PROSITE" id="PS00174">
    <property type="entry name" value="P_GLUCOSE_ISOMERASE_2"/>
    <property type="match status" value="1"/>
</dbReference>
<dbReference type="PROSITE" id="PS51463">
    <property type="entry name" value="P_GLUCOSE_ISOMERASE_3"/>
    <property type="match status" value="1"/>
</dbReference>
<organism>
    <name type="scientific">Pseudomonas aeruginosa (strain LESB58)</name>
    <dbReference type="NCBI Taxonomy" id="557722"/>
    <lineage>
        <taxon>Bacteria</taxon>
        <taxon>Pseudomonadati</taxon>
        <taxon>Pseudomonadota</taxon>
        <taxon>Gammaproteobacteria</taxon>
        <taxon>Pseudomonadales</taxon>
        <taxon>Pseudomonadaceae</taxon>
        <taxon>Pseudomonas</taxon>
    </lineage>
</organism>
<keyword id="KW-0963">Cytoplasm</keyword>
<keyword id="KW-0312">Gluconeogenesis</keyword>
<keyword id="KW-0324">Glycolysis</keyword>
<keyword id="KW-0413">Isomerase</keyword>
<evidence type="ECO:0000255" key="1">
    <source>
        <dbReference type="HAMAP-Rule" id="MF_00473"/>
    </source>
</evidence>
<name>G6PI_PSEA8</name>
<sequence>MKHHLTPLDATQLDSWRALAAHRQELQDFRMRQAFIDDPERFKRFSFSACGLFLDFSKNLIRQDTIDLLVKLAEEARLSDAIRAMFDGEAINASERRPVLHTALRRPIGDKVLVDGVDVMPEVHRVLHQMTELVGYVHNGLWRGYTEKPITDVVNIGIGGSFLGPQLVSEALLPFAQKGVRCHYLANIDGSEFHELASRLNAETTLFIVSSKSFGTLETLKNAQAARAWYLAQGGTEEELYRHFIAVSSNKEAAIAFGIREENIFPMWDWVGGRYSLWSAIGLPIAMSIGISNFKELLSGAYNMDQHFQTAPFERNIPVLLGLLGVWYGDFWGANSHAILPYDYYLRNITDHLQQLDMESNGKSVRQDGTPVTSGTGPVIWGGVGCNGQHAYHQLLHQGTQLIPADFIVPVSSYNPVADHHQWLYANCLSQSQALMLGKSREEAEAELRAKGLPEAEVQRLAPHKVIPGNRPSNTLVVERISARRLGALIAMYEHKVYVQSILWGINAFDQWGVELGKELGKGVYSRLVGSEETPAEDASTQGLIDFFRGRHRG</sequence>
<reference key="1">
    <citation type="journal article" date="2009" name="Genome Res.">
        <title>Newly introduced genomic prophage islands are critical determinants of in vivo competitiveness in the Liverpool epidemic strain of Pseudomonas aeruginosa.</title>
        <authorList>
            <person name="Winstanley C."/>
            <person name="Langille M.G.I."/>
            <person name="Fothergill J.L."/>
            <person name="Kukavica-Ibrulj I."/>
            <person name="Paradis-Bleau C."/>
            <person name="Sanschagrin F."/>
            <person name="Thomson N.R."/>
            <person name="Winsor G.L."/>
            <person name="Quail M.A."/>
            <person name="Lennard N."/>
            <person name="Bignell A."/>
            <person name="Clarke L."/>
            <person name="Seeger K."/>
            <person name="Saunders D."/>
            <person name="Harris D."/>
            <person name="Parkhill J."/>
            <person name="Hancock R.E.W."/>
            <person name="Brinkman F.S.L."/>
            <person name="Levesque R.C."/>
        </authorList>
    </citation>
    <scope>NUCLEOTIDE SEQUENCE [LARGE SCALE GENOMIC DNA]</scope>
    <source>
        <strain>LESB58</strain>
    </source>
</reference>
<comment type="function">
    <text evidence="1">Catalyzes the reversible isomerization of glucose-6-phosphate to fructose-6-phosphate.</text>
</comment>
<comment type="catalytic activity">
    <reaction evidence="1">
        <text>alpha-D-glucose 6-phosphate = beta-D-fructose 6-phosphate</text>
        <dbReference type="Rhea" id="RHEA:11816"/>
        <dbReference type="ChEBI" id="CHEBI:57634"/>
        <dbReference type="ChEBI" id="CHEBI:58225"/>
        <dbReference type="EC" id="5.3.1.9"/>
    </reaction>
</comment>
<comment type="pathway">
    <text evidence="1">Carbohydrate biosynthesis; gluconeogenesis.</text>
</comment>
<comment type="pathway">
    <text evidence="1">Carbohydrate degradation; glycolysis; D-glyceraldehyde 3-phosphate and glycerone phosphate from D-glucose: step 2/4.</text>
</comment>
<comment type="subcellular location">
    <subcellularLocation>
        <location evidence="1">Cytoplasm</location>
    </subcellularLocation>
</comment>
<comment type="similarity">
    <text evidence="1">Belongs to the GPI family.</text>
</comment>
<feature type="chain" id="PRO_1000125745" description="Glucose-6-phosphate isomerase">
    <location>
        <begin position="1"/>
        <end position="554"/>
    </location>
</feature>
<feature type="active site" description="Proton donor" evidence="1">
    <location>
        <position position="359"/>
    </location>
</feature>
<feature type="active site" evidence="1">
    <location>
        <position position="390"/>
    </location>
</feature>
<feature type="active site" evidence="1">
    <location>
        <position position="518"/>
    </location>
</feature>
<gene>
    <name evidence="1" type="primary">pgi</name>
    <name type="ordered locus">PLES_51171</name>
</gene>
<proteinExistence type="inferred from homology"/>
<protein>
    <recommendedName>
        <fullName evidence="1">Glucose-6-phosphate isomerase</fullName>
        <shortName evidence="1">GPI</shortName>
        <ecNumber evidence="1">5.3.1.9</ecNumber>
    </recommendedName>
    <alternativeName>
        <fullName evidence="1">Phosphoglucose isomerase</fullName>
        <shortName evidence="1">PGI</shortName>
    </alternativeName>
    <alternativeName>
        <fullName evidence="1">Phosphohexose isomerase</fullName>
        <shortName evidence="1">PHI</shortName>
    </alternativeName>
</protein>
<accession>B7V1E4</accession>